<comment type="catalytic activity">
    <reaction evidence="1">
        <text>Hydrolysis of terminal non-reducing beta-D-galactose residues in beta-D-galactosides.</text>
        <dbReference type="EC" id="3.2.1.23"/>
    </reaction>
</comment>
<comment type="cofactor">
    <cofactor evidence="1">
        <name>Mg(2+)</name>
        <dbReference type="ChEBI" id="CHEBI:18420"/>
    </cofactor>
    <text evidence="1">Binds 2 magnesium ions per monomer.</text>
</comment>
<comment type="cofactor">
    <cofactor evidence="1">
        <name>Na(+)</name>
        <dbReference type="ChEBI" id="CHEBI:29101"/>
    </cofactor>
    <text evidence="1">Binds 1 sodium ion per monomer.</text>
</comment>
<comment type="subunit">
    <text evidence="1">Homotetramer.</text>
</comment>
<comment type="similarity">
    <text evidence="1">Belongs to the glycosyl hydrolase 2 family.</text>
</comment>
<keyword id="KW-0326">Glycosidase</keyword>
<keyword id="KW-0378">Hydrolase</keyword>
<keyword id="KW-0460">Magnesium</keyword>
<keyword id="KW-0479">Metal-binding</keyword>
<keyword id="KW-1185">Reference proteome</keyword>
<keyword id="KW-0915">Sodium</keyword>
<reference key="1">
    <citation type="journal article" date="2006" name="Proc. Natl. Acad. Sci. U.S.A.">
        <title>Comparative genomics of the lactic acid bacteria.</title>
        <authorList>
            <person name="Makarova K.S."/>
            <person name="Slesarev A."/>
            <person name="Wolf Y.I."/>
            <person name="Sorokin A."/>
            <person name="Mirkin B."/>
            <person name="Koonin E.V."/>
            <person name="Pavlov A."/>
            <person name="Pavlova N."/>
            <person name="Karamychev V."/>
            <person name="Polouchine N."/>
            <person name="Shakhova V."/>
            <person name="Grigoriev I."/>
            <person name="Lou Y."/>
            <person name="Rohksar D."/>
            <person name="Lucas S."/>
            <person name="Huang K."/>
            <person name="Goodstein D.M."/>
            <person name="Hawkins T."/>
            <person name="Plengvidhya V."/>
            <person name="Welker D."/>
            <person name="Hughes J."/>
            <person name="Goh Y."/>
            <person name="Benson A."/>
            <person name="Baldwin K."/>
            <person name="Lee J.-H."/>
            <person name="Diaz-Muniz I."/>
            <person name="Dosti B."/>
            <person name="Smeianov V."/>
            <person name="Wechter W."/>
            <person name="Barabote R."/>
            <person name="Lorca G."/>
            <person name="Altermann E."/>
            <person name="Barrangou R."/>
            <person name="Ganesan B."/>
            <person name="Xie Y."/>
            <person name="Rawsthorne H."/>
            <person name="Tamir D."/>
            <person name="Parker C."/>
            <person name="Breidt F."/>
            <person name="Broadbent J.R."/>
            <person name="Hutkins R."/>
            <person name="O'Sullivan D."/>
            <person name="Steele J."/>
            <person name="Unlu G."/>
            <person name="Saier M.H. Jr."/>
            <person name="Klaenhammer T."/>
            <person name="Richardson P."/>
            <person name="Kozyavkin S."/>
            <person name="Weimer B.C."/>
            <person name="Mills D.A."/>
        </authorList>
    </citation>
    <scope>NUCLEOTIDE SEQUENCE [LARGE SCALE GENOMIC DNA]</scope>
    <source>
        <strain>ATCC 8293 / DSM 20343 / BCRC 11652 / CCM 1803 / JCM 6124 / NCDO 523 / NBRC 100496 / NCIMB 8023 / NCTC 12954 / NRRL B-1118 / 37Y</strain>
    </source>
</reference>
<accession>Q03WL0</accession>
<dbReference type="EC" id="3.2.1.23" evidence="1"/>
<dbReference type="EMBL" id="CP000414">
    <property type="protein sequence ID" value="ABJ62412.1"/>
    <property type="molecule type" value="Genomic_DNA"/>
</dbReference>
<dbReference type="RefSeq" id="WP_011680026.1">
    <property type="nucleotide sequence ID" value="NC_008531.1"/>
</dbReference>
<dbReference type="SMR" id="Q03WL0"/>
<dbReference type="CAZy" id="GH2">
    <property type="family name" value="Glycoside Hydrolase Family 2"/>
</dbReference>
<dbReference type="EnsemblBacteria" id="ABJ62412">
    <property type="protein sequence ID" value="ABJ62412"/>
    <property type="gene ID" value="LEUM_1316"/>
</dbReference>
<dbReference type="GeneID" id="29575874"/>
<dbReference type="KEGG" id="lme:LEUM_1316"/>
<dbReference type="eggNOG" id="COG3250">
    <property type="taxonomic scope" value="Bacteria"/>
</dbReference>
<dbReference type="HOGENOM" id="CLU_002346_0_2_9"/>
<dbReference type="Proteomes" id="UP000000362">
    <property type="component" value="Chromosome"/>
</dbReference>
<dbReference type="GO" id="GO:0009341">
    <property type="term" value="C:beta-galactosidase complex"/>
    <property type="evidence" value="ECO:0007669"/>
    <property type="project" value="InterPro"/>
</dbReference>
<dbReference type="GO" id="GO:0004565">
    <property type="term" value="F:beta-galactosidase activity"/>
    <property type="evidence" value="ECO:0007669"/>
    <property type="project" value="UniProtKB-EC"/>
</dbReference>
<dbReference type="GO" id="GO:0030246">
    <property type="term" value="F:carbohydrate binding"/>
    <property type="evidence" value="ECO:0007669"/>
    <property type="project" value="InterPro"/>
</dbReference>
<dbReference type="GO" id="GO:0000287">
    <property type="term" value="F:magnesium ion binding"/>
    <property type="evidence" value="ECO:0007669"/>
    <property type="project" value="UniProtKB-UniRule"/>
</dbReference>
<dbReference type="GO" id="GO:0005990">
    <property type="term" value="P:lactose catabolic process"/>
    <property type="evidence" value="ECO:0007669"/>
    <property type="project" value="TreeGrafter"/>
</dbReference>
<dbReference type="FunFam" id="3.20.20.80:FF:000018">
    <property type="entry name" value="Beta-galactosidase"/>
    <property type="match status" value="1"/>
</dbReference>
<dbReference type="Gene3D" id="2.70.98.10">
    <property type="match status" value="1"/>
</dbReference>
<dbReference type="Gene3D" id="2.60.120.260">
    <property type="entry name" value="Galactose-binding domain-like"/>
    <property type="match status" value="1"/>
</dbReference>
<dbReference type="Gene3D" id="3.20.20.80">
    <property type="entry name" value="Glycosidases"/>
    <property type="match status" value="1"/>
</dbReference>
<dbReference type="Gene3D" id="2.60.40.10">
    <property type="entry name" value="Immunoglobulins"/>
    <property type="match status" value="2"/>
</dbReference>
<dbReference type="HAMAP" id="MF_01687">
    <property type="entry name" value="Beta_gal"/>
    <property type="match status" value="1"/>
</dbReference>
<dbReference type="InterPro" id="IPR004199">
    <property type="entry name" value="B-gal_small/dom_5"/>
</dbReference>
<dbReference type="InterPro" id="IPR050347">
    <property type="entry name" value="Bact_Beta-galactosidase"/>
</dbReference>
<dbReference type="InterPro" id="IPR036156">
    <property type="entry name" value="Beta-gal/glucu_dom_sf"/>
</dbReference>
<dbReference type="InterPro" id="IPR011013">
    <property type="entry name" value="Gal_mutarotase_sf_dom"/>
</dbReference>
<dbReference type="InterPro" id="IPR008979">
    <property type="entry name" value="Galactose-bd-like_sf"/>
</dbReference>
<dbReference type="InterPro" id="IPR014718">
    <property type="entry name" value="GH-type_carb-bd"/>
</dbReference>
<dbReference type="InterPro" id="IPR006101">
    <property type="entry name" value="Glyco_hydro_2"/>
</dbReference>
<dbReference type="InterPro" id="IPR023933">
    <property type="entry name" value="Glyco_hydro_2_beta_Galsidase"/>
</dbReference>
<dbReference type="InterPro" id="IPR006103">
    <property type="entry name" value="Glyco_hydro_2_cat"/>
</dbReference>
<dbReference type="InterPro" id="IPR006102">
    <property type="entry name" value="Glyco_hydro_2_Ig-like"/>
</dbReference>
<dbReference type="InterPro" id="IPR006104">
    <property type="entry name" value="Glyco_hydro_2_N"/>
</dbReference>
<dbReference type="InterPro" id="IPR017853">
    <property type="entry name" value="Glycoside_hydrolase_SF"/>
</dbReference>
<dbReference type="InterPro" id="IPR013783">
    <property type="entry name" value="Ig-like_fold"/>
</dbReference>
<dbReference type="InterPro" id="IPR032312">
    <property type="entry name" value="LacZ_4"/>
</dbReference>
<dbReference type="NCBIfam" id="NF007074">
    <property type="entry name" value="PRK09525.1"/>
    <property type="match status" value="1"/>
</dbReference>
<dbReference type="PANTHER" id="PTHR46323">
    <property type="entry name" value="BETA-GALACTOSIDASE"/>
    <property type="match status" value="1"/>
</dbReference>
<dbReference type="PANTHER" id="PTHR46323:SF2">
    <property type="entry name" value="BETA-GALACTOSIDASE"/>
    <property type="match status" value="1"/>
</dbReference>
<dbReference type="Pfam" id="PF02929">
    <property type="entry name" value="Bgal_small_N"/>
    <property type="match status" value="1"/>
</dbReference>
<dbReference type="Pfam" id="PF00703">
    <property type="entry name" value="Glyco_hydro_2"/>
    <property type="match status" value="1"/>
</dbReference>
<dbReference type="Pfam" id="PF02836">
    <property type="entry name" value="Glyco_hydro_2_C"/>
    <property type="match status" value="1"/>
</dbReference>
<dbReference type="Pfam" id="PF02837">
    <property type="entry name" value="Glyco_hydro_2_N"/>
    <property type="match status" value="1"/>
</dbReference>
<dbReference type="Pfam" id="PF16353">
    <property type="entry name" value="LacZ_4"/>
    <property type="match status" value="1"/>
</dbReference>
<dbReference type="PRINTS" id="PR00132">
    <property type="entry name" value="GLHYDRLASE2"/>
</dbReference>
<dbReference type="SMART" id="SM01038">
    <property type="entry name" value="Bgal_small_N"/>
    <property type="match status" value="1"/>
</dbReference>
<dbReference type="SUPFAM" id="SSF51445">
    <property type="entry name" value="(Trans)glycosidases"/>
    <property type="match status" value="1"/>
</dbReference>
<dbReference type="SUPFAM" id="SSF49303">
    <property type="entry name" value="beta-Galactosidase/glucuronidase domain"/>
    <property type="match status" value="2"/>
</dbReference>
<dbReference type="SUPFAM" id="SSF74650">
    <property type="entry name" value="Galactose mutarotase-like"/>
    <property type="match status" value="1"/>
</dbReference>
<dbReference type="SUPFAM" id="SSF49785">
    <property type="entry name" value="Galactose-binding domain-like"/>
    <property type="match status" value="1"/>
</dbReference>
<feature type="chain" id="PRO_0000367003" description="Beta-galactosidase">
    <location>
        <begin position="1"/>
        <end position="1036"/>
    </location>
</feature>
<feature type="active site" description="Proton donor" evidence="1">
    <location>
        <position position="456"/>
    </location>
</feature>
<feature type="active site" description="Nucleophile" evidence="1">
    <location>
        <position position="532"/>
    </location>
</feature>
<feature type="binding site" evidence="1">
    <location>
        <position position="97"/>
    </location>
    <ligand>
        <name>substrate</name>
    </ligand>
</feature>
<feature type="binding site" evidence="1">
    <location>
        <position position="197"/>
    </location>
    <ligand>
        <name>Na(+)</name>
        <dbReference type="ChEBI" id="CHEBI:29101"/>
    </ligand>
</feature>
<feature type="binding site" evidence="1">
    <location>
        <position position="197"/>
    </location>
    <ligand>
        <name>substrate</name>
    </ligand>
</feature>
<feature type="binding site" evidence="1">
    <location>
        <position position="411"/>
    </location>
    <ligand>
        <name>Mg(2+)</name>
        <dbReference type="ChEBI" id="CHEBI:18420"/>
        <label>1</label>
    </ligand>
</feature>
<feature type="binding site" evidence="1">
    <location>
        <position position="413"/>
    </location>
    <ligand>
        <name>Mg(2+)</name>
        <dbReference type="ChEBI" id="CHEBI:18420"/>
        <label>1</label>
    </ligand>
</feature>
<feature type="binding site" evidence="1">
    <location>
        <position position="456"/>
    </location>
    <ligand>
        <name>Mg(2+)</name>
        <dbReference type="ChEBI" id="CHEBI:18420"/>
        <label>1</label>
    </ligand>
</feature>
<feature type="binding site" evidence="1">
    <location>
        <position position="456"/>
    </location>
    <ligand>
        <name>substrate</name>
    </ligand>
</feature>
<feature type="binding site" evidence="1">
    <location>
        <begin position="532"/>
        <end position="535"/>
    </location>
    <ligand>
        <name>substrate</name>
    </ligand>
</feature>
<feature type="binding site" evidence="1">
    <location>
        <position position="592"/>
    </location>
    <ligand>
        <name>Mg(2+)</name>
        <dbReference type="ChEBI" id="CHEBI:18420"/>
        <label>2</label>
    </ligand>
</feature>
<feature type="binding site" evidence="1">
    <location>
        <position position="596"/>
    </location>
    <ligand>
        <name>Na(+)</name>
        <dbReference type="ChEBI" id="CHEBI:29101"/>
    </ligand>
</feature>
<feature type="binding site" evidence="1">
    <location>
        <position position="599"/>
    </location>
    <ligand>
        <name>Na(+)</name>
        <dbReference type="ChEBI" id="CHEBI:29101"/>
    </ligand>
</feature>
<feature type="binding site" evidence="1">
    <location>
        <position position="599"/>
    </location>
    <ligand>
        <name>substrate</name>
    </ligand>
</feature>
<feature type="binding site" evidence="1">
    <location>
        <position position="1006"/>
    </location>
    <ligand>
        <name>substrate</name>
    </ligand>
</feature>
<feature type="site" description="Transition state stabilizer" evidence="1">
    <location>
        <position position="352"/>
    </location>
</feature>
<feature type="site" description="Transition state stabilizer" evidence="1">
    <location>
        <position position="386"/>
    </location>
</feature>
<sequence length="1036" mass="119401">MTSIKQILARHDWENPVVTNWNRLPLHTSMSYANERNKREIKQPRKSLNGPWQFSYFENLSDIDEEWRKKDLPTSKIIHVPSNWQLQGDYDVPVYTNVTYPFPVNPPYVPTENPVGAYSKKVFLDNKWLADNTESHVVFNGVGSAFYLWVNGEWVGYSEDSRLPAEFDITEELRAGENRIAVLVLKWSKGSYFEDQDMWRMSGIFRDVDLIRVPKTRFQDLAIETKLDEDLDDATVEVRAQLVGNSADNLSVTAELFYHGMSLFKATEQFGNRVIDERGTNDGQVSLELPVKNPALWSAEVPNLYDIKVSLHDGEENYQIENKKVGIRKVQIKDGLLTLNNQPLLIRGVNKHEFNSKTGYYVDEKTMIDDIRMMKEHNFNAVRLSHYPNASRWYELCDQYGLYLVDEANIETHGVKPMNYLTNDPKYLPLMMERVTRMVQRDYNHPSIIIWSLGNESGYGHNHDAMYQWIKNTDPSRPIQYEGGGADTPATDIIAPMYARVDQDQVEEVNSKWAIKKWIGLSKENRPLILCEYAHSMGNSLGGFNKYWEAFEKYPRLQGGFIWDWVDQGLLTKNNEGQSYYAYGGDFGDYPNDRQFSLDGLLFPDRTPKPALLEAKYCQQYFAFQLEKDPTGKVNYMTVSNKHLFKTVNDATLIYQILSNDQVIETKKIKLNLAPQTEERVSLNFSDNSNEDVYMNCQIVQDSTDGLIRSGTLLAYKQFILRNKPIMISDVRSSDDYEDFLINDATDSLSISLDDAIWQFNKRTGWLSNWIKNGQEKVLTPLKDQFSRAALDNDIGVSEVTNIDPNAWFERWQATGFNHLNEKLVQFNWTALKDEVRITTQHQFLSPIDQHIMFISSKEYRINHVGDLKVYVDVWRQVADPQPARIGLSVQINATTDAVTYSGLGPMENYPDRRSAAIRGKWDASLKELYTPYVFPSENGLRTEVAYLKFDHHVIRALEQRFSFNLSQFSQAQLSAVTHQHLLKPEEGVWLNIDGYHMGVGGDDSWSPSVSPEFLLSNDHYHYSFSWSNAEGEANV</sequence>
<protein>
    <recommendedName>
        <fullName evidence="1">Beta-galactosidase</fullName>
        <shortName evidence="1">Beta-gal</shortName>
        <ecNumber evidence="1">3.2.1.23</ecNumber>
    </recommendedName>
    <alternativeName>
        <fullName evidence="1">Lactase</fullName>
    </alternativeName>
</protein>
<organism>
    <name type="scientific">Leuconostoc mesenteroides subsp. mesenteroides (strain ATCC 8293 / DSM 20343 / BCRC 11652 / CCM 1803 / JCM 6124 / NCDO 523 / NBRC 100496 / NCIMB 8023 / NCTC 12954 / NRRL B-1118 / 37Y)</name>
    <dbReference type="NCBI Taxonomy" id="203120"/>
    <lineage>
        <taxon>Bacteria</taxon>
        <taxon>Bacillati</taxon>
        <taxon>Bacillota</taxon>
        <taxon>Bacilli</taxon>
        <taxon>Lactobacillales</taxon>
        <taxon>Lactobacillaceae</taxon>
        <taxon>Leuconostoc</taxon>
    </lineage>
</organism>
<gene>
    <name evidence="1" type="primary">lacZ</name>
    <name type="ordered locus">LEUM_1316</name>
</gene>
<proteinExistence type="inferred from homology"/>
<evidence type="ECO:0000255" key="1">
    <source>
        <dbReference type="HAMAP-Rule" id="MF_01687"/>
    </source>
</evidence>
<name>BGAL_LEUMM</name>